<comment type="function">
    <text evidence="1">Succinyl-CoA synthetase functions in the citric acid cycle (TCA), coupling the hydrolysis of succinyl-CoA to the synthesis of either ATP or GTP and thus represents the only step of substrate-level phosphorylation in the TCA. The beta subunit provides nucleotide specificity of the enzyme and binds the substrate succinate, while the binding sites for coenzyme A and phosphate are found in the alpha subunit.</text>
</comment>
<comment type="catalytic activity">
    <reaction evidence="1">
        <text>succinate + ATP + CoA = succinyl-CoA + ADP + phosphate</text>
        <dbReference type="Rhea" id="RHEA:17661"/>
        <dbReference type="ChEBI" id="CHEBI:30031"/>
        <dbReference type="ChEBI" id="CHEBI:30616"/>
        <dbReference type="ChEBI" id="CHEBI:43474"/>
        <dbReference type="ChEBI" id="CHEBI:57287"/>
        <dbReference type="ChEBI" id="CHEBI:57292"/>
        <dbReference type="ChEBI" id="CHEBI:456216"/>
        <dbReference type="EC" id="6.2.1.5"/>
    </reaction>
    <physiologicalReaction direction="right-to-left" evidence="1">
        <dbReference type="Rhea" id="RHEA:17663"/>
    </physiologicalReaction>
</comment>
<comment type="catalytic activity">
    <reaction evidence="1">
        <text>GTP + succinate + CoA = succinyl-CoA + GDP + phosphate</text>
        <dbReference type="Rhea" id="RHEA:22120"/>
        <dbReference type="ChEBI" id="CHEBI:30031"/>
        <dbReference type="ChEBI" id="CHEBI:37565"/>
        <dbReference type="ChEBI" id="CHEBI:43474"/>
        <dbReference type="ChEBI" id="CHEBI:57287"/>
        <dbReference type="ChEBI" id="CHEBI:57292"/>
        <dbReference type="ChEBI" id="CHEBI:58189"/>
    </reaction>
    <physiologicalReaction direction="right-to-left" evidence="1">
        <dbReference type="Rhea" id="RHEA:22122"/>
    </physiologicalReaction>
</comment>
<comment type="cofactor">
    <cofactor evidence="1">
        <name>Mg(2+)</name>
        <dbReference type="ChEBI" id="CHEBI:18420"/>
    </cofactor>
    <text evidence="1">Binds 1 Mg(2+) ion per subunit.</text>
</comment>
<comment type="pathway">
    <text evidence="1">Carbohydrate metabolism; tricarboxylic acid cycle; succinate from succinyl-CoA (ligase route): step 1/1.</text>
</comment>
<comment type="subunit">
    <text evidence="1">Heterotetramer of two alpha and two beta subunits.</text>
</comment>
<comment type="similarity">
    <text evidence="1">Belongs to the succinate/malate CoA ligase beta subunit family.</text>
</comment>
<evidence type="ECO:0000255" key="1">
    <source>
        <dbReference type="HAMAP-Rule" id="MF_00558"/>
    </source>
</evidence>
<gene>
    <name evidence="1" type="primary">sucC</name>
    <name type="ordered locus">SAOUHSC_01216</name>
</gene>
<feature type="chain" id="PRO_1000082244" description="Succinate--CoA ligase [ADP-forming] subunit beta">
    <location>
        <begin position="1"/>
        <end position="388"/>
    </location>
</feature>
<feature type="domain" description="ATP-grasp" evidence="1">
    <location>
        <begin position="9"/>
        <end position="244"/>
    </location>
</feature>
<feature type="binding site" evidence="1">
    <location>
        <position position="46"/>
    </location>
    <ligand>
        <name>ATP</name>
        <dbReference type="ChEBI" id="CHEBI:30616"/>
    </ligand>
</feature>
<feature type="binding site" evidence="1">
    <location>
        <begin position="53"/>
        <end position="55"/>
    </location>
    <ligand>
        <name>ATP</name>
        <dbReference type="ChEBI" id="CHEBI:30616"/>
    </ligand>
</feature>
<feature type="binding site" evidence="1">
    <location>
        <position position="99"/>
    </location>
    <ligand>
        <name>ATP</name>
        <dbReference type="ChEBI" id="CHEBI:30616"/>
    </ligand>
</feature>
<feature type="binding site" evidence="1">
    <location>
        <position position="102"/>
    </location>
    <ligand>
        <name>ATP</name>
        <dbReference type="ChEBI" id="CHEBI:30616"/>
    </ligand>
</feature>
<feature type="binding site" evidence="1">
    <location>
        <position position="107"/>
    </location>
    <ligand>
        <name>ATP</name>
        <dbReference type="ChEBI" id="CHEBI:30616"/>
    </ligand>
</feature>
<feature type="binding site" evidence="1">
    <location>
        <position position="199"/>
    </location>
    <ligand>
        <name>Mg(2+)</name>
        <dbReference type="ChEBI" id="CHEBI:18420"/>
    </ligand>
</feature>
<feature type="binding site" evidence="1">
    <location>
        <position position="213"/>
    </location>
    <ligand>
        <name>Mg(2+)</name>
        <dbReference type="ChEBI" id="CHEBI:18420"/>
    </ligand>
</feature>
<feature type="binding site" evidence="1">
    <location>
        <position position="264"/>
    </location>
    <ligand>
        <name>substrate</name>
        <note>ligand shared with subunit alpha</note>
    </ligand>
</feature>
<feature type="binding site" evidence="1">
    <location>
        <begin position="321"/>
        <end position="323"/>
    </location>
    <ligand>
        <name>substrate</name>
        <note>ligand shared with subunit alpha</note>
    </ligand>
</feature>
<name>SUCC_STAA8</name>
<proteinExistence type="inferred from homology"/>
<sequence length="388" mass="42056">MNIHEYQGKEIFRSMGVAVPEGRVAFTAEEAVEKAKELNSDVYVVKAQIHAGGRGKAGGVKIAKSLSEVETYAKELLGKTLVTHQTGPEGKEIKRLYIEEGCAIQKEYYVGFVIDRATDQVTLMASEEGGTEIEEVAAKTPEKIFKETIDPVIGLSPFQARRIAFNINIPKESVNKAAKFLLALYNVFIEKDCSIVEINPLVTTADGDVLALDAKINFDDNALFRHKDVVELRDLEEEDPKEIEASKHDLSYIALDGDIGCMVNGAGLAMATMDTINHFGGNPANFLDAGGSATREKVTEAFKIILGDENVKGIFVNIFGGIMKCDVIAEGIVEAVKEVDLTLPLVVRLEGTNVELGKKILKDSGLAIEPAATMAEGAQKIVKLVKEA</sequence>
<organism>
    <name type="scientific">Staphylococcus aureus (strain NCTC 8325 / PS 47)</name>
    <dbReference type="NCBI Taxonomy" id="93061"/>
    <lineage>
        <taxon>Bacteria</taxon>
        <taxon>Bacillati</taxon>
        <taxon>Bacillota</taxon>
        <taxon>Bacilli</taxon>
        <taxon>Bacillales</taxon>
        <taxon>Staphylococcaceae</taxon>
        <taxon>Staphylococcus</taxon>
    </lineage>
</organism>
<accession>Q2FZ37</accession>
<protein>
    <recommendedName>
        <fullName evidence="1">Succinate--CoA ligase [ADP-forming] subunit beta</fullName>
        <ecNumber evidence="1">6.2.1.5</ecNumber>
    </recommendedName>
    <alternativeName>
        <fullName evidence="1">Succinyl-CoA synthetase subunit beta</fullName>
        <shortName evidence="1">SCS-beta</shortName>
    </alternativeName>
</protein>
<dbReference type="EC" id="6.2.1.5" evidence="1"/>
<dbReference type="EMBL" id="CP000253">
    <property type="protein sequence ID" value="ABD30321.1"/>
    <property type="molecule type" value="Genomic_DNA"/>
</dbReference>
<dbReference type="RefSeq" id="WP_001020801.1">
    <property type="nucleotide sequence ID" value="NZ_LS483365.1"/>
</dbReference>
<dbReference type="RefSeq" id="YP_499753.1">
    <property type="nucleotide sequence ID" value="NC_007795.1"/>
</dbReference>
<dbReference type="SMR" id="Q2FZ37"/>
<dbReference type="STRING" id="93061.SAOUHSC_01216"/>
<dbReference type="PaxDb" id="1280-SAXN108_1247"/>
<dbReference type="GeneID" id="3919482"/>
<dbReference type="KEGG" id="sao:SAOUHSC_01216"/>
<dbReference type="PATRIC" id="fig|93061.5.peg.1115"/>
<dbReference type="eggNOG" id="COG0045">
    <property type="taxonomic scope" value="Bacteria"/>
</dbReference>
<dbReference type="HOGENOM" id="CLU_037430_0_2_9"/>
<dbReference type="OrthoDB" id="9802602at2"/>
<dbReference type="UniPathway" id="UPA00223">
    <property type="reaction ID" value="UER00999"/>
</dbReference>
<dbReference type="PRO" id="PR:Q2FZ37"/>
<dbReference type="Proteomes" id="UP000008816">
    <property type="component" value="Chromosome"/>
</dbReference>
<dbReference type="GO" id="GO:0005829">
    <property type="term" value="C:cytosol"/>
    <property type="evidence" value="ECO:0000318"/>
    <property type="project" value="GO_Central"/>
</dbReference>
<dbReference type="GO" id="GO:0042709">
    <property type="term" value="C:succinate-CoA ligase complex"/>
    <property type="evidence" value="ECO:0000318"/>
    <property type="project" value="GO_Central"/>
</dbReference>
<dbReference type="GO" id="GO:0005524">
    <property type="term" value="F:ATP binding"/>
    <property type="evidence" value="ECO:0007669"/>
    <property type="project" value="UniProtKB-UniRule"/>
</dbReference>
<dbReference type="GO" id="GO:0000287">
    <property type="term" value="F:magnesium ion binding"/>
    <property type="evidence" value="ECO:0007669"/>
    <property type="project" value="UniProtKB-UniRule"/>
</dbReference>
<dbReference type="GO" id="GO:0004775">
    <property type="term" value="F:succinate-CoA ligase (ADP-forming) activity"/>
    <property type="evidence" value="ECO:0000318"/>
    <property type="project" value="GO_Central"/>
</dbReference>
<dbReference type="GO" id="GO:0004776">
    <property type="term" value="F:succinate-CoA ligase (GDP-forming) activity"/>
    <property type="evidence" value="ECO:0007669"/>
    <property type="project" value="RHEA"/>
</dbReference>
<dbReference type="GO" id="GO:0006104">
    <property type="term" value="P:succinyl-CoA metabolic process"/>
    <property type="evidence" value="ECO:0000318"/>
    <property type="project" value="GO_Central"/>
</dbReference>
<dbReference type="GO" id="GO:0006099">
    <property type="term" value="P:tricarboxylic acid cycle"/>
    <property type="evidence" value="ECO:0000318"/>
    <property type="project" value="GO_Central"/>
</dbReference>
<dbReference type="FunFam" id="3.30.1490.20:FF:000002">
    <property type="entry name" value="Succinate--CoA ligase [ADP-forming] subunit beta"/>
    <property type="match status" value="1"/>
</dbReference>
<dbReference type="FunFam" id="3.30.470.20:FF:000002">
    <property type="entry name" value="Succinate--CoA ligase [ADP-forming] subunit beta"/>
    <property type="match status" value="1"/>
</dbReference>
<dbReference type="FunFam" id="3.40.50.261:FF:000001">
    <property type="entry name" value="Succinate--CoA ligase [ADP-forming] subunit beta"/>
    <property type="match status" value="1"/>
</dbReference>
<dbReference type="Gene3D" id="3.30.1490.20">
    <property type="entry name" value="ATP-grasp fold, A domain"/>
    <property type="match status" value="1"/>
</dbReference>
<dbReference type="Gene3D" id="3.30.470.20">
    <property type="entry name" value="ATP-grasp fold, B domain"/>
    <property type="match status" value="1"/>
</dbReference>
<dbReference type="Gene3D" id="3.40.50.261">
    <property type="entry name" value="Succinyl-CoA synthetase domains"/>
    <property type="match status" value="1"/>
</dbReference>
<dbReference type="HAMAP" id="MF_00558">
    <property type="entry name" value="Succ_CoA_beta"/>
    <property type="match status" value="1"/>
</dbReference>
<dbReference type="InterPro" id="IPR011761">
    <property type="entry name" value="ATP-grasp"/>
</dbReference>
<dbReference type="InterPro" id="IPR013650">
    <property type="entry name" value="ATP-grasp_succ-CoA_synth-type"/>
</dbReference>
<dbReference type="InterPro" id="IPR013815">
    <property type="entry name" value="ATP_grasp_subdomain_1"/>
</dbReference>
<dbReference type="InterPro" id="IPR017866">
    <property type="entry name" value="Succ-CoA_synthase_bsu_CS"/>
</dbReference>
<dbReference type="InterPro" id="IPR005811">
    <property type="entry name" value="SUCC_ACL_C"/>
</dbReference>
<dbReference type="InterPro" id="IPR005809">
    <property type="entry name" value="Succ_CoA_ligase-like_bsu"/>
</dbReference>
<dbReference type="InterPro" id="IPR016102">
    <property type="entry name" value="Succinyl-CoA_synth-like"/>
</dbReference>
<dbReference type="NCBIfam" id="NF001913">
    <property type="entry name" value="PRK00696.1"/>
    <property type="match status" value="1"/>
</dbReference>
<dbReference type="NCBIfam" id="TIGR01016">
    <property type="entry name" value="sucCoAbeta"/>
    <property type="match status" value="1"/>
</dbReference>
<dbReference type="PANTHER" id="PTHR11815:SF10">
    <property type="entry name" value="SUCCINATE--COA LIGASE [GDP-FORMING] SUBUNIT BETA, MITOCHONDRIAL"/>
    <property type="match status" value="1"/>
</dbReference>
<dbReference type="PANTHER" id="PTHR11815">
    <property type="entry name" value="SUCCINYL-COA SYNTHETASE BETA CHAIN"/>
    <property type="match status" value="1"/>
</dbReference>
<dbReference type="Pfam" id="PF08442">
    <property type="entry name" value="ATP-grasp_2"/>
    <property type="match status" value="1"/>
</dbReference>
<dbReference type="Pfam" id="PF00549">
    <property type="entry name" value="Ligase_CoA"/>
    <property type="match status" value="1"/>
</dbReference>
<dbReference type="PIRSF" id="PIRSF001554">
    <property type="entry name" value="SucCS_beta"/>
    <property type="match status" value="1"/>
</dbReference>
<dbReference type="SUPFAM" id="SSF56059">
    <property type="entry name" value="Glutathione synthetase ATP-binding domain-like"/>
    <property type="match status" value="1"/>
</dbReference>
<dbReference type="SUPFAM" id="SSF52210">
    <property type="entry name" value="Succinyl-CoA synthetase domains"/>
    <property type="match status" value="1"/>
</dbReference>
<dbReference type="PROSITE" id="PS50975">
    <property type="entry name" value="ATP_GRASP"/>
    <property type="match status" value="1"/>
</dbReference>
<dbReference type="PROSITE" id="PS01217">
    <property type="entry name" value="SUCCINYL_COA_LIG_3"/>
    <property type="match status" value="1"/>
</dbReference>
<keyword id="KW-0067">ATP-binding</keyword>
<keyword id="KW-0436">Ligase</keyword>
<keyword id="KW-0460">Magnesium</keyword>
<keyword id="KW-0479">Metal-binding</keyword>
<keyword id="KW-0547">Nucleotide-binding</keyword>
<keyword id="KW-1185">Reference proteome</keyword>
<keyword id="KW-0816">Tricarboxylic acid cycle</keyword>
<reference key="1">
    <citation type="book" date="2006" name="Gram positive pathogens, 2nd edition">
        <title>The Staphylococcus aureus NCTC 8325 genome.</title>
        <editorList>
            <person name="Fischetti V."/>
            <person name="Novick R."/>
            <person name="Ferretti J."/>
            <person name="Portnoy D."/>
            <person name="Rood J."/>
        </editorList>
        <authorList>
            <person name="Gillaspy A.F."/>
            <person name="Worrell V."/>
            <person name="Orvis J."/>
            <person name="Roe B.A."/>
            <person name="Dyer D.W."/>
            <person name="Iandolo J.J."/>
        </authorList>
    </citation>
    <scope>NUCLEOTIDE SEQUENCE [LARGE SCALE GENOMIC DNA]</scope>
    <source>
        <strain>NCTC 8325 / PS 47</strain>
    </source>
</reference>